<keyword id="KW-0963">Cytoplasm</keyword>
<keyword id="KW-0690">Ribosome biogenesis</keyword>
<name>RBFA_STAA1</name>
<comment type="function">
    <text evidence="1">One of several proteins that assist in the late maturation steps of the functional core of the 30S ribosomal subunit. Associates with free 30S ribosomal subunits (but not with 30S subunits that are part of 70S ribosomes or polysomes). Required for efficient processing of 16S rRNA. May interact with the 5'-terminal helix region of 16S rRNA.</text>
</comment>
<comment type="subunit">
    <text evidence="1">Monomer. Binds 30S ribosomal subunits, but not 50S ribosomal subunits or 70S ribosomes.</text>
</comment>
<comment type="subcellular location">
    <subcellularLocation>
        <location evidence="1">Cytoplasm</location>
    </subcellularLocation>
</comment>
<comment type="similarity">
    <text evidence="1">Belongs to the RbfA family.</text>
</comment>
<accession>A7X1Q2</accession>
<proteinExistence type="inferred from homology"/>
<sequence length="116" mass="13515">MSSMRAERVGEQMKKELMDIINNKVKDPRVGFITITDVVLTNDLSQAKVFLTVLGNDKEVENTFKALDKAKGFIKSELGSRMRLRIMPELMYEYDQSIEYGNKIERMIQDLHKQDR</sequence>
<feature type="chain" id="PRO_1000000219" description="Ribosome-binding factor A">
    <location>
        <begin position="1"/>
        <end position="116"/>
    </location>
</feature>
<gene>
    <name evidence="1" type="primary">rbfA</name>
    <name type="ordered locus">SAHV_1260</name>
</gene>
<dbReference type="EMBL" id="AP009324">
    <property type="protein sequence ID" value="BAF78143.1"/>
    <property type="molecule type" value="Genomic_DNA"/>
</dbReference>
<dbReference type="RefSeq" id="WP_000097322.1">
    <property type="nucleotide sequence ID" value="NZ_CTYB01000004.1"/>
</dbReference>
<dbReference type="SMR" id="A7X1Q2"/>
<dbReference type="KEGG" id="saw:SAHV_1260"/>
<dbReference type="HOGENOM" id="CLU_089475_6_3_9"/>
<dbReference type="GO" id="GO:0005829">
    <property type="term" value="C:cytosol"/>
    <property type="evidence" value="ECO:0007669"/>
    <property type="project" value="TreeGrafter"/>
</dbReference>
<dbReference type="GO" id="GO:0043024">
    <property type="term" value="F:ribosomal small subunit binding"/>
    <property type="evidence" value="ECO:0007669"/>
    <property type="project" value="TreeGrafter"/>
</dbReference>
<dbReference type="GO" id="GO:0030490">
    <property type="term" value="P:maturation of SSU-rRNA"/>
    <property type="evidence" value="ECO:0007669"/>
    <property type="project" value="UniProtKB-UniRule"/>
</dbReference>
<dbReference type="FunFam" id="3.30.300.20:FF:000009">
    <property type="entry name" value="Ribosome-binding factor A"/>
    <property type="match status" value="1"/>
</dbReference>
<dbReference type="Gene3D" id="3.30.300.20">
    <property type="match status" value="1"/>
</dbReference>
<dbReference type="HAMAP" id="MF_00003">
    <property type="entry name" value="RbfA"/>
    <property type="match status" value="1"/>
</dbReference>
<dbReference type="InterPro" id="IPR015946">
    <property type="entry name" value="KH_dom-like_a/b"/>
</dbReference>
<dbReference type="InterPro" id="IPR000238">
    <property type="entry name" value="RbfA"/>
</dbReference>
<dbReference type="InterPro" id="IPR023799">
    <property type="entry name" value="RbfA_dom_sf"/>
</dbReference>
<dbReference type="InterPro" id="IPR020053">
    <property type="entry name" value="Ribosome-bd_factorA_CS"/>
</dbReference>
<dbReference type="NCBIfam" id="TIGR00082">
    <property type="entry name" value="rbfA"/>
    <property type="match status" value="1"/>
</dbReference>
<dbReference type="PANTHER" id="PTHR33515">
    <property type="entry name" value="RIBOSOME-BINDING FACTOR A, CHLOROPLASTIC-RELATED"/>
    <property type="match status" value="1"/>
</dbReference>
<dbReference type="PANTHER" id="PTHR33515:SF1">
    <property type="entry name" value="RIBOSOME-BINDING FACTOR A, CHLOROPLASTIC-RELATED"/>
    <property type="match status" value="1"/>
</dbReference>
<dbReference type="Pfam" id="PF02033">
    <property type="entry name" value="RBFA"/>
    <property type="match status" value="1"/>
</dbReference>
<dbReference type="SUPFAM" id="SSF89919">
    <property type="entry name" value="Ribosome-binding factor A, RbfA"/>
    <property type="match status" value="1"/>
</dbReference>
<dbReference type="PROSITE" id="PS01319">
    <property type="entry name" value="RBFA"/>
    <property type="match status" value="1"/>
</dbReference>
<evidence type="ECO:0000255" key="1">
    <source>
        <dbReference type="HAMAP-Rule" id="MF_00003"/>
    </source>
</evidence>
<reference key="1">
    <citation type="journal article" date="2008" name="Antimicrob. Agents Chemother.">
        <title>Mutated response regulator graR is responsible for phenotypic conversion of Staphylococcus aureus from heterogeneous vancomycin-intermediate resistance to vancomycin-intermediate resistance.</title>
        <authorList>
            <person name="Neoh H.-M."/>
            <person name="Cui L."/>
            <person name="Yuzawa H."/>
            <person name="Takeuchi F."/>
            <person name="Matsuo M."/>
            <person name="Hiramatsu K."/>
        </authorList>
    </citation>
    <scope>NUCLEOTIDE SEQUENCE [LARGE SCALE GENOMIC DNA]</scope>
    <source>
        <strain>Mu3 / ATCC 700698</strain>
    </source>
</reference>
<protein>
    <recommendedName>
        <fullName evidence="1">Ribosome-binding factor A</fullName>
    </recommendedName>
</protein>
<organism>
    <name type="scientific">Staphylococcus aureus (strain Mu3 / ATCC 700698)</name>
    <dbReference type="NCBI Taxonomy" id="418127"/>
    <lineage>
        <taxon>Bacteria</taxon>
        <taxon>Bacillati</taxon>
        <taxon>Bacillota</taxon>
        <taxon>Bacilli</taxon>
        <taxon>Bacillales</taxon>
        <taxon>Staphylococcaceae</taxon>
        <taxon>Staphylococcus</taxon>
    </lineage>
</organism>